<name>SMR3B_HUMAN</name>
<accession>P02814</accession>
<accession>B7ZMG7</accession>
<accession>Q9UBN0</accession>
<accession>Q9UCT0</accession>
<sequence length="79" mass="8188">MKSLTWILGLWALAACFTPGESQRGPRGPYPPGPLAPPQPFGPGFVPPPPPPPYGPGRIPPPPPAPYGPGIFPPPPPQP</sequence>
<feature type="signal peptide" evidence="2">
    <location>
        <begin position="1"/>
        <end position="22"/>
    </location>
</feature>
<feature type="chain" id="PRO_0000022112" description="Submaxillary gland androgen-regulated protein 3B">
    <location>
        <begin position="23"/>
        <end position="79"/>
    </location>
</feature>
<feature type="peptide" id="PRO_0000022113" description="Peptide D1A">
    <location>
        <begin position="30"/>
        <end position="43"/>
    </location>
</feature>
<feature type="peptide" id="PRO_0000022114" description="Peptide P-A">
    <location>
        <begin position="42"/>
        <end position="79"/>
    </location>
</feature>
<feature type="region of interest" description="Disordered" evidence="1">
    <location>
        <begin position="19"/>
        <end position="79"/>
    </location>
</feature>
<feature type="compositionally biased region" description="Pro residues" evidence="1">
    <location>
        <begin position="28"/>
        <end position="79"/>
    </location>
</feature>
<feature type="modified residue" description="Pyrrolidone carboxylic acid" evidence="2">
    <location>
        <position position="23"/>
    </location>
</feature>
<gene>
    <name type="primary">SMR3B</name>
    <name type="synonym">PBII</name>
    <name type="synonym">PRL3</name>
    <name type="synonym">PROL3</name>
</gene>
<dbReference type="EMBL" id="D29833">
    <property type="protein sequence ID" value="BAA06213.1"/>
    <property type="molecule type" value="mRNA"/>
</dbReference>
<dbReference type="EMBL" id="AB031740">
    <property type="protein sequence ID" value="BAA88517.1"/>
    <property type="molecule type" value="Genomic_DNA"/>
</dbReference>
<dbReference type="EMBL" id="CH471057">
    <property type="protein sequence ID" value="EAX05619.1"/>
    <property type="molecule type" value="Genomic_DNA"/>
</dbReference>
<dbReference type="EMBL" id="BC015327">
    <property type="protein sequence ID" value="AAH15327.1"/>
    <property type="molecule type" value="mRNA"/>
</dbReference>
<dbReference type="EMBL" id="BC144529">
    <property type="protein sequence ID" value="AAI44530.1"/>
    <property type="molecule type" value="mRNA"/>
</dbReference>
<dbReference type="CCDS" id="CCDS3540.1"/>
<dbReference type="PIR" id="JX0321">
    <property type="entry name" value="PJHUSB"/>
</dbReference>
<dbReference type="RefSeq" id="NP_006676.1">
    <property type="nucleotide sequence ID" value="NM_006685.4"/>
</dbReference>
<dbReference type="BioGRID" id="116087">
    <property type="interactions" value="40"/>
</dbReference>
<dbReference type="FunCoup" id="P02814">
    <property type="interactions" value="219"/>
</dbReference>
<dbReference type="IntAct" id="P02814">
    <property type="interactions" value="18"/>
</dbReference>
<dbReference type="MINT" id="P02814"/>
<dbReference type="STRING" id="9606.ENSP00000481313"/>
<dbReference type="BioMuta" id="SMR3B"/>
<dbReference type="jPOST" id="P02814"/>
<dbReference type="MassIVE" id="P02814"/>
<dbReference type="PaxDb" id="9606-ENSP00000302400"/>
<dbReference type="PeptideAtlas" id="P02814"/>
<dbReference type="PRIDE" id="P02814"/>
<dbReference type="ProteomicsDB" id="51605"/>
<dbReference type="Pumba" id="P02814"/>
<dbReference type="TopDownProteomics" id="P02814"/>
<dbReference type="Antibodypedia" id="24325">
    <property type="antibodies" value="14 antibodies from 6 providers"/>
</dbReference>
<dbReference type="DNASU" id="10879"/>
<dbReference type="Ensembl" id="ENST00000304915.8">
    <property type="protein sequence ID" value="ENSP00000302400.3"/>
    <property type="gene ID" value="ENSG00000171201.12"/>
</dbReference>
<dbReference type="Ensembl" id="ENST00000504825.5">
    <property type="protein sequence ID" value="ENSP00000423138.1"/>
    <property type="gene ID" value="ENSG00000171201.12"/>
</dbReference>
<dbReference type="GeneID" id="10879"/>
<dbReference type="KEGG" id="hsa:10879"/>
<dbReference type="MANE-Select" id="ENST00000304915.8">
    <property type="protein sequence ID" value="ENSP00000302400.3"/>
    <property type="RefSeq nucleotide sequence ID" value="NM_006685.4"/>
    <property type="RefSeq protein sequence ID" value="NP_006676.1"/>
</dbReference>
<dbReference type="UCSC" id="uc003hfh.3">
    <property type="organism name" value="human"/>
</dbReference>
<dbReference type="AGR" id="HGNC:17326"/>
<dbReference type="CTD" id="10879"/>
<dbReference type="DisGeNET" id="10879"/>
<dbReference type="GeneCards" id="SMR3B"/>
<dbReference type="HGNC" id="HGNC:17326">
    <property type="gene designation" value="SMR3B"/>
</dbReference>
<dbReference type="HPA" id="ENSG00000171201">
    <property type="expression patterns" value="Tissue enriched (salivary)"/>
</dbReference>
<dbReference type="MIM" id="611593">
    <property type="type" value="gene"/>
</dbReference>
<dbReference type="neXtProt" id="NX_P02814"/>
<dbReference type="OpenTargets" id="ENSG00000171201"/>
<dbReference type="PharmGKB" id="PA33805"/>
<dbReference type="VEuPathDB" id="HostDB:ENSG00000171201"/>
<dbReference type="eggNOG" id="ENOG502TF4A">
    <property type="taxonomic scope" value="Eukaryota"/>
</dbReference>
<dbReference type="GeneTree" id="ENSGT01010000224746"/>
<dbReference type="HOGENOM" id="CLU_2694207_0_0_1"/>
<dbReference type="InParanoid" id="P02814"/>
<dbReference type="OMA" id="QPYGPGR"/>
<dbReference type="PAN-GO" id="P02814">
    <property type="GO annotations" value="2 GO annotations based on evolutionary models"/>
</dbReference>
<dbReference type="PathwayCommons" id="P02814"/>
<dbReference type="SignaLink" id="P02814"/>
<dbReference type="BioGRID-ORCS" id="10879">
    <property type="hits" value="17 hits in 1128 CRISPR screens"/>
</dbReference>
<dbReference type="ChiTaRS" id="SMR3B">
    <property type="organism name" value="human"/>
</dbReference>
<dbReference type="GenomeRNAi" id="10879"/>
<dbReference type="Pharos" id="P02814">
    <property type="development level" value="Tdark"/>
</dbReference>
<dbReference type="PRO" id="PR:P02814"/>
<dbReference type="Proteomes" id="UP000005640">
    <property type="component" value="Chromosome 4"/>
</dbReference>
<dbReference type="RNAct" id="P02814">
    <property type="molecule type" value="protein"/>
</dbReference>
<dbReference type="Bgee" id="ENSG00000171201">
    <property type="expression patterns" value="Expressed in parotid gland and 94 other cell types or tissues"/>
</dbReference>
<dbReference type="GO" id="GO:0070062">
    <property type="term" value="C:extracellular exosome"/>
    <property type="evidence" value="ECO:0007005"/>
    <property type="project" value="UniProtKB"/>
</dbReference>
<dbReference type="GO" id="GO:0005615">
    <property type="term" value="C:extracellular space"/>
    <property type="evidence" value="ECO:0000304"/>
    <property type="project" value="ProtInc"/>
</dbReference>
<dbReference type="GO" id="GO:0004866">
    <property type="term" value="F:endopeptidase inhibitor activity"/>
    <property type="evidence" value="ECO:0000318"/>
    <property type="project" value="GO_Central"/>
</dbReference>
<dbReference type="GO" id="GO:0051930">
    <property type="term" value="P:regulation of sensory perception of pain"/>
    <property type="evidence" value="ECO:0000318"/>
    <property type="project" value="GO_Central"/>
</dbReference>
<dbReference type="InterPro" id="IPR026288">
    <property type="entry name" value="SMR-like"/>
</dbReference>
<dbReference type="PANTHER" id="PTHR14179">
    <property type="entry name" value="SMR1-RELATED"/>
    <property type="match status" value="1"/>
</dbReference>
<dbReference type="PANTHER" id="PTHR14179:SF13">
    <property type="entry name" value="SUBMAXILLARY GLAND ANDROGEN-REGULATED PROTEIN 3B"/>
    <property type="match status" value="1"/>
</dbReference>
<dbReference type="Pfam" id="PF15621">
    <property type="entry name" value="PROL5-SMR"/>
    <property type="match status" value="1"/>
</dbReference>
<keyword id="KW-0903">Direct protein sequencing</keyword>
<keyword id="KW-1267">Proteomics identification</keyword>
<keyword id="KW-0873">Pyrrolidone carboxylic acid</keyword>
<keyword id="KW-1185">Reference proteome</keyword>
<keyword id="KW-0677">Repeat</keyword>
<keyword id="KW-0964">Secreted</keyword>
<keyword id="KW-0732">Signal</keyword>
<organism>
    <name type="scientific">Homo sapiens</name>
    <name type="common">Human</name>
    <dbReference type="NCBI Taxonomy" id="9606"/>
    <lineage>
        <taxon>Eukaryota</taxon>
        <taxon>Metazoa</taxon>
        <taxon>Chordata</taxon>
        <taxon>Craniata</taxon>
        <taxon>Vertebrata</taxon>
        <taxon>Euteleostomi</taxon>
        <taxon>Mammalia</taxon>
        <taxon>Eutheria</taxon>
        <taxon>Euarchontoglires</taxon>
        <taxon>Primates</taxon>
        <taxon>Haplorrhini</taxon>
        <taxon>Catarrhini</taxon>
        <taxon>Hominidae</taxon>
        <taxon>Homo</taxon>
    </lineage>
</organism>
<reference key="1">
    <citation type="journal article" date="1994" name="J. Biochem.">
        <title>Molecular cloning and sequence analysis of cDNA coding for the precursor of the human salivary proline-rich peptide P-B.</title>
        <authorList>
            <person name="Isemura S."/>
            <person name="Saito E."/>
        </authorList>
    </citation>
    <scope>NUCLEOTIDE SEQUENCE [MRNA]</scope>
    <scope>TISSUE SPECIFICITY</scope>
    <source>
        <tissue>Submandibular gland</tissue>
    </source>
</reference>
<reference key="2">
    <citation type="journal article" date="2000" name="J. Biochem.">
        <title>Nucleotide sequence of gene PBII encoding salivary proline-rich protein P-B.</title>
        <authorList>
            <person name="Isemura S."/>
        </authorList>
    </citation>
    <scope>NUCLEOTIDE SEQUENCE [GENOMIC DNA]</scope>
    <source>
        <tissue>Blood</tissue>
    </source>
</reference>
<reference key="3">
    <citation type="submission" date="2005-07" db="EMBL/GenBank/DDBJ databases">
        <authorList>
            <person name="Mural R.J."/>
            <person name="Istrail S."/>
            <person name="Sutton G.G."/>
            <person name="Florea L."/>
            <person name="Halpern A.L."/>
            <person name="Mobarry C.M."/>
            <person name="Lippert R."/>
            <person name="Walenz B."/>
            <person name="Shatkay H."/>
            <person name="Dew I."/>
            <person name="Miller J.R."/>
            <person name="Flanigan M.J."/>
            <person name="Edwards N.J."/>
            <person name="Bolanos R."/>
            <person name="Fasulo D."/>
            <person name="Halldorsson B.V."/>
            <person name="Hannenhalli S."/>
            <person name="Turner R."/>
            <person name="Yooseph S."/>
            <person name="Lu F."/>
            <person name="Nusskern D.R."/>
            <person name="Shue B.C."/>
            <person name="Zheng X.H."/>
            <person name="Zhong F."/>
            <person name="Delcher A.L."/>
            <person name="Huson D.H."/>
            <person name="Kravitz S.A."/>
            <person name="Mouchard L."/>
            <person name="Reinert K."/>
            <person name="Remington K.A."/>
            <person name="Clark A.G."/>
            <person name="Waterman M.S."/>
            <person name="Eichler E.E."/>
            <person name="Adams M.D."/>
            <person name="Hunkapiller M.W."/>
            <person name="Myers E.W."/>
            <person name="Venter J.C."/>
        </authorList>
    </citation>
    <scope>NUCLEOTIDE SEQUENCE [LARGE SCALE GENOMIC DNA]</scope>
</reference>
<reference key="4">
    <citation type="journal article" date="2004" name="Genome Res.">
        <title>The status, quality, and expansion of the NIH full-length cDNA project: the Mammalian Gene Collection (MGC).</title>
        <authorList>
            <consortium name="The MGC Project Team"/>
        </authorList>
    </citation>
    <scope>NUCLEOTIDE SEQUENCE [LARGE SCALE MRNA]</scope>
    <source>
        <tissue>Duodenum</tissue>
    </source>
</reference>
<reference key="5">
    <citation type="journal article" date="1979" name="J. Biochem.">
        <title>Isolation and amino acid sequences of proline-rich peptides of human whole saliva.</title>
        <authorList>
            <person name="Isemura S."/>
            <person name="Saitoh E."/>
            <person name="Sanada K."/>
        </authorList>
    </citation>
    <scope>PROTEIN SEQUENCE OF 23-79</scope>
    <scope>PYROGLUTAMATE FORMATION AT GLN-23</scope>
    <source>
        <tissue>Saliva</tissue>
    </source>
</reference>
<reference key="6">
    <citation type="journal article" date="1991" name="Biochem. J.">
        <title>Large-scale purification and characterization of the major phosphoproteins and mucins of human submandibular-sublingual saliva.</title>
        <authorList>
            <person name="Ramasubbu N."/>
            <person name="Reddy M.S."/>
            <person name="Bergey E.J."/>
            <person name="Haraszthy G.G."/>
            <person name="Soni S.-D."/>
            <person name="Levine M.J."/>
        </authorList>
    </citation>
    <scope>PROTEIN SEQUENCE OF 30-43</scope>
    <source>
        <tissue>Saliva</tissue>
    </source>
</reference>
<proteinExistence type="evidence at protein level"/>
<evidence type="ECO:0000256" key="1">
    <source>
        <dbReference type="SAM" id="MobiDB-lite"/>
    </source>
</evidence>
<evidence type="ECO:0000269" key="2">
    <source>
    </source>
</evidence>
<evidence type="ECO:0000269" key="3">
    <source>
    </source>
</evidence>
<evidence type="ECO:0000305" key="4"/>
<comment type="interaction">
    <interactant intactId="EBI-738612">
        <id>P02814</id>
    </interactant>
    <interactant intactId="EBI-7936069">
        <id>P06276</id>
        <label>BCHE</label>
    </interactant>
    <organismsDiffer>false</organismsDiffer>
    <experiments>2</experiments>
</comment>
<comment type="interaction">
    <interactant intactId="EBI-738612">
        <id>P02814</id>
    </interactant>
    <interactant intactId="EBI-748420">
        <id>Q9NSC5</id>
        <label>HOMER3</label>
    </interactant>
    <organismsDiffer>false</organismsDiffer>
    <experiments>3</experiments>
</comment>
<comment type="interaction">
    <interactant intactId="EBI-738612">
        <id>P02814</id>
    </interactant>
    <interactant intactId="EBI-741480">
        <id>Q9UMX0</id>
        <label>UBQLN1</label>
    </interactant>
    <organismsDiffer>false</organismsDiffer>
    <experiments>3</experiments>
</comment>
<comment type="interaction">
    <interactant intactId="EBI-738612">
        <id>P02814</id>
    </interactant>
    <interactant intactId="EBI-10173939">
        <id>Q9UMX0-2</id>
        <label>UBQLN1</label>
    </interactant>
    <organismsDiffer>false</organismsDiffer>
    <experiments>3</experiments>
</comment>
<comment type="interaction">
    <interactant intactId="EBI-738612">
        <id>P02814</id>
    </interactant>
    <interactant intactId="EBI-947187">
        <id>Q9UHD9</id>
        <label>UBQLN2</label>
    </interactant>
    <organismsDiffer>false</organismsDiffer>
    <experiments>3</experiments>
</comment>
<comment type="subcellular location">
    <subcellularLocation>
        <location>Secreted</location>
    </subcellularLocation>
</comment>
<comment type="tissue specificity">
    <text evidence="3">Secreted into saliva by submaxillary gland. Not expressed in heart, brain, lung, liver, skeletal muscle, Kidney, pancreas or placenta.</text>
</comment>
<comment type="PTM">
    <text>P-A and D1A are probably degradation products of P-B.</text>
</comment>
<comment type="similarity">
    <text evidence="4">Belongs to the PROL1/PROL3 family.</text>
</comment>
<protein>
    <recommendedName>
        <fullName>Submaxillary gland androgen-regulated protein 3B</fullName>
    </recommendedName>
    <alternativeName>
        <fullName>Proline-rich peptide P-B</fullName>
    </alternativeName>
    <alternativeName>
        <fullName>Proline-rich protein 3</fullName>
    </alternativeName>
    <component>
        <recommendedName>
            <fullName>Peptide P-A</fullName>
        </recommendedName>
    </component>
    <component>
        <recommendedName>
            <fullName>Peptide D1A</fullName>
        </recommendedName>
    </component>
</protein>